<sequence>MSVSLSKGQGVSLKKNEYDLSSVTIGLGWDINEEKKGFLGGIFGKKEEEYDLDVIAFLCNSAGKVTDLGNVENGKPTLVNGDIIFFNSLRHKSGNIWLTGDNRTGAGDGDDEQIIVRLNSLDAQYEKIVFIVQIYNGEKLQQHFGKVQNAFIRAVDARNIEMARFDLSGGPAFASQRSMVFAELIREATGWKLRAIGEPSESDSFVSHLRNYM</sequence>
<geneLocation type="plasmid">
    <name>IncHI2 R478</name>
</geneLocation>
<dbReference type="EMBL" id="U49054">
    <property type="protein sequence ID" value="AAC44738.1"/>
    <property type="molecule type" value="Genomic_DNA"/>
</dbReference>
<dbReference type="RefSeq" id="NP_941140.1">
    <property type="nucleotide sequence ID" value="NC_005211.1"/>
</dbReference>
<dbReference type="RefSeq" id="WP_000116681.1">
    <property type="nucleotide sequence ID" value="NZ_VOMJ01000014.1"/>
</dbReference>
<dbReference type="SMR" id="P75012"/>
<dbReference type="GO" id="GO:0046690">
    <property type="term" value="P:response to tellurium ion"/>
    <property type="evidence" value="ECO:0007669"/>
    <property type="project" value="UniProtKB-KW"/>
</dbReference>
<dbReference type="CDD" id="cd06974">
    <property type="entry name" value="TerD_like"/>
    <property type="match status" value="1"/>
</dbReference>
<dbReference type="Gene3D" id="2.60.60.30">
    <property type="entry name" value="sav2460 like domains"/>
    <property type="match status" value="1"/>
</dbReference>
<dbReference type="InterPro" id="IPR051324">
    <property type="entry name" value="Stress/Tellurium_Resist"/>
</dbReference>
<dbReference type="InterPro" id="IPR003325">
    <property type="entry name" value="TerD"/>
</dbReference>
<dbReference type="PANTHER" id="PTHR32097">
    <property type="entry name" value="CAMP-BINDING PROTEIN 1-RELATED"/>
    <property type="match status" value="1"/>
</dbReference>
<dbReference type="PANTHER" id="PTHR32097:SF4">
    <property type="entry name" value="GENERAL STRESS PROTEIN 16U"/>
    <property type="match status" value="1"/>
</dbReference>
<dbReference type="Pfam" id="PF02342">
    <property type="entry name" value="TerD"/>
    <property type="match status" value="1"/>
</dbReference>
<evidence type="ECO:0000305" key="1"/>
<name>TERX_SERMA</name>
<comment type="function">
    <text>Not known; seems to contribute to the tellurium resistance (Ter) mechanism. Also involved in phage inhibition (Phi) and colicin resistance (PacB).</text>
</comment>
<comment type="similarity">
    <text evidence="1">Belongs to the CAPAB/TerDEXZ family.</text>
</comment>
<reference key="1">
    <citation type="submission" date="1996-02" db="EMBL/GenBank/DDBJ databases">
        <title>Characterization of a region from plasmid R478 which prevents lethality of the phage/colicin/tellurite resistance cluster.</title>
        <authorList>
            <person name="Whelan K.F."/>
            <person name="Taylor D.E."/>
        </authorList>
    </citation>
    <scope>NUCLEOTIDE SEQUENCE [GENOMIC DNA]</scope>
</reference>
<proteinExistence type="inferred from homology"/>
<protein>
    <recommendedName>
        <fullName>Tellurium resistance protein TerX</fullName>
    </recommendedName>
</protein>
<accession>P75012</accession>
<organism>
    <name type="scientific">Serratia marcescens</name>
    <dbReference type="NCBI Taxonomy" id="615"/>
    <lineage>
        <taxon>Bacteria</taxon>
        <taxon>Pseudomonadati</taxon>
        <taxon>Pseudomonadota</taxon>
        <taxon>Gammaproteobacteria</taxon>
        <taxon>Enterobacterales</taxon>
        <taxon>Yersiniaceae</taxon>
        <taxon>Serratia</taxon>
    </lineage>
</organism>
<gene>
    <name type="primary">terX</name>
</gene>
<keyword id="KW-0614">Plasmid</keyword>
<keyword id="KW-0778">Tellurium resistance</keyword>
<feature type="chain" id="PRO_0000170781" description="Tellurium resistance protein TerX">
    <location>
        <begin position="1"/>
        <end position="213"/>
    </location>
</feature>